<feature type="chain" id="PRO_0000300802" description="Homoserine kinase">
    <location>
        <begin position="1"/>
        <end position="321"/>
    </location>
</feature>
<evidence type="ECO:0000255" key="1">
    <source>
        <dbReference type="HAMAP-Rule" id="MF_00301"/>
    </source>
</evidence>
<reference key="1">
    <citation type="journal article" date="2006" name="Genome Biol.">
        <title>The genome of Rhizobium leguminosarum has recognizable core and accessory components.</title>
        <authorList>
            <person name="Young J.P.W."/>
            <person name="Crossman L.C."/>
            <person name="Johnston A.W.B."/>
            <person name="Thomson N.R."/>
            <person name="Ghazoui Z.F."/>
            <person name="Hull K.H."/>
            <person name="Wexler M."/>
            <person name="Curson A.R.J."/>
            <person name="Todd J.D."/>
            <person name="Poole P.S."/>
            <person name="Mauchline T.H."/>
            <person name="East A.K."/>
            <person name="Quail M.A."/>
            <person name="Churcher C."/>
            <person name="Arrowsmith C."/>
            <person name="Cherevach I."/>
            <person name="Chillingworth T."/>
            <person name="Clarke K."/>
            <person name="Cronin A."/>
            <person name="Davis P."/>
            <person name="Fraser A."/>
            <person name="Hance Z."/>
            <person name="Hauser H."/>
            <person name="Jagels K."/>
            <person name="Moule S."/>
            <person name="Mungall K."/>
            <person name="Norbertczak H."/>
            <person name="Rabbinowitsch E."/>
            <person name="Sanders M."/>
            <person name="Simmonds M."/>
            <person name="Whitehead S."/>
            <person name="Parkhill J."/>
        </authorList>
    </citation>
    <scope>NUCLEOTIDE SEQUENCE [LARGE SCALE GENOMIC DNA]</scope>
    <source>
        <strain>DSM 114642 / LMG 32736 / 3841</strain>
    </source>
</reference>
<protein>
    <recommendedName>
        <fullName evidence="1">Homoserine kinase</fullName>
        <shortName evidence="1">HK</shortName>
        <shortName evidence="1">HSK</shortName>
        <ecNumber evidence="1">2.7.1.39</ecNumber>
    </recommendedName>
</protein>
<organism>
    <name type="scientific">Rhizobium johnstonii (strain DSM 114642 / LMG 32736 / 3841)</name>
    <name type="common">Rhizobium leguminosarum bv. viciae</name>
    <dbReference type="NCBI Taxonomy" id="216596"/>
    <lineage>
        <taxon>Bacteria</taxon>
        <taxon>Pseudomonadati</taxon>
        <taxon>Pseudomonadota</taxon>
        <taxon>Alphaproteobacteria</taxon>
        <taxon>Hyphomicrobiales</taxon>
        <taxon>Rhizobiaceae</taxon>
        <taxon>Rhizobium/Agrobacterium group</taxon>
        <taxon>Rhizobium</taxon>
        <taxon>Rhizobium johnstonii</taxon>
    </lineage>
</organism>
<gene>
    <name evidence="1" type="primary">thrB</name>
    <name type="ordered locus">RL1031</name>
</gene>
<proteinExistence type="inferred from homology"/>
<accession>Q1MKH7</accession>
<keyword id="KW-0028">Amino-acid biosynthesis</keyword>
<keyword id="KW-0067">ATP-binding</keyword>
<keyword id="KW-0418">Kinase</keyword>
<keyword id="KW-0547">Nucleotide-binding</keyword>
<keyword id="KW-0791">Threonine biosynthesis</keyword>
<keyword id="KW-0808">Transferase</keyword>
<dbReference type="EC" id="2.7.1.39" evidence="1"/>
<dbReference type="EMBL" id="AM236080">
    <property type="protein sequence ID" value="CAK06528.1"/>
    <property type="molecule type" value="Genomic_DNA"/>
</dbReference>
<dbReference type="RefSeq" id="WP_011650765.1">
    <property type="nucleotide sequence ID" value="NC_008380.1"/>
</dbReference>
<dbReference type="SMR" id="Q1MKH7"/>
<dbReference type="EnsemblBacteria" id="CAK06528">
    <property type="protein sequence ID" value="CAK06528"/>
    <property type="gene ID" value="RL1031"/>
</dbReference>
<dbReference type="KEGG" id="rle:RL1031"/>
<dbReference type="eggNOG" id="COG2334">
    <property type="taxonomic scope" value="Bacteria"/>
</dbReference>
<dbReference type="HOGENOM" id="CLU_053300_0_0_5"/>
<dbReference type="UniPathway" id="UPA00050">
    <property type="reaction ID" value="UER00064"/>
</dbReference>
<dbReference type="Proteomes" id="UP000006575">
    <property type="component" value="Chromosome"/>
</dbReference>
<dbReference type="GO" id="GO:0005524">
    <property type="term" value="F:ATP binding"/>
    <property type="evidence" value="ECO:0007669"/>
    <property type="project" value="UniProtKB-KW"/>
</dbReference>
<dbReference type="GO" id="GO:0004413">
    <property type="term" value="F:homoserine kinase activity"/>
    <property type="evidence" value="ECO:0007669"/>
    <property type="project" value="UniProtKB-UniRule"/>
</dbReference>
<dbReference type="GO" id="GO:0009088">
    <property type="term" value="P:threonine biosynthetic process"/>
    <property type="evidence" value="ECO:0007669"/>
    <property type="project" value="UniProtKB-UniRule"/>
</dbReference>
<dbReference type="CDD" id="cd05153">
    <property type="entry name" value="HomoserineK_II"/>
    <property type="match status" value="1"/>
</dbReference>
<dbReference type="Gene3D" id="3.90.1200.10">
    <property type="match status" value="1"/>
</dbReference>
<dbReference type="Gene3D" id="3.30.200.20">
    <property type="entry name" value="Phosphorylase Kinase, domain 1"/>
    <property type="match status" value="1"/>
</dbReference>
<dbReference type="HAMAP" id="MF_00301">
    <property type="entry name" value="Homoser_kinase_2"/>
    <property type="match status" value="1"/>
</dbReference>
<dbReference type="InterPro" id="IPR002575">
    <property type="entry name" value="Aminoglycoside_PTrfase"/>
</dbReference>
<dbReference type="InterPro" id="IPR005280">
    <property type="entry name" value="Homoserine_kinase_II"/>
</dbReference>
<dbReference type="InterPro" id="IPR011009">
    <property type="entry name" value="Kinase-like_dom_sf"/>
</dbReference>
<dbReference type="InterPro" id="IPR050249">
    <property type="entry name" value="Pseudomonas-type_ThrB"/>
</dbReference>
<dbReference type="NCBIfam" id="NF003558">
    <property type="entry name" value="PRK05231.1"/>
    <property type="match status" value="1"/>
</dbReference>
<dbReference type="NCBIfam" id="TIGR00938">
    <property type="entry name" value="thrB_alt"/>
    <property type="match status" value="1"/>
</dbReference>
<dbReference type="PANTHER" id="PTHR21064:SF6">
    <property type="entry name" value="AMINOGLYCOSIDE PHOSPHOTRANSFERASE DOMAIN-CONTAINING PROTEIN"/>
    <property type="match status" value="1"/>
</dbReference>
<dbReference type="PANTHER" id="PTHR21064">
    <property type="entry name" value="AMINOGLYCOSIDE PHOSPHOTRANSFERASE DOMAIN-CONTAINING PROTEIN-RELATED"/>
    <property type="match status" value="1"/>
</dbReference>
<dbReference type="Pfam" id="PF01636">
    <property type="entry name" value="APH"/>
    <property type="match status" value="1"/>
</dbReference>
<dbReference type="SUPFAM" id="SSF56112">
    <property type="entry name" value="Protein kinase-like (PK-like)"/>
    <property type="match status" value="1"/>
</dbReference>
<sequence>MAVYTDIAEDDLKWFLTEYDAGTLLSYKGIAEGVENSNFLLHTSKDPLILTLYEKRVEKSDLPFFLGLMQHLSARGLSCPLPLPRRDGALLGSLSGRPAALISFLEGMWLRKPEAKHCREVGRALAEMHVAGDGFALKRPNALSIDGWRGLWEKSEARAGEVEPGLRDEIRSELDFLSAAWPSGLPAGVIHADLFPDNVFFLGDQLSGLIDFYFACNDLLAYDVSICLNAWCFEKDGAYNITKGTAMLEGYQSVRPLSDAEISALPVLSRGSALRFFLTRLYDWLTTPEGAMVTKKDPLEYLRKLRFHRQIKSPAEYGLSL</sequence>
<name>KHSE_RHIJ3</name>
<comment type="catalytic activity">
    <reaction evidence="1">
        <text>L-homoserine + ATP = O-phospho-L-homoserine + ADP + H(+)</text>
        <dbReference type="Rhea" id="RHEA:13985"/>
        <dbReference type="ChEBI" id="CHEBI:15378"/>
        <dbReference type="ChEBI" id="CHEBI:30616"/>
        <dbReference type="ChEBI" id="CHEBI:57476"/>
        <dbReference type="ChEBI" id="CHEBI:57590"/>
        <dbReference type="ChEBI" id="CHEBI:456216"/>
        <dbReference type="EC" id="2.7.1.39"/>
    </reaction>
</comment>
<comment type="pathway">
    <text evidence="1">Amino-acid biosynthesis; L-threonine biosynthesis; L-threonine from L-aspartate: step 4/5.</text>
</comment>
<comment type="similarity">
    <text evidence="1">Belongs to the pseudomonas-type ThrB family.</text>
</comment>